<evidence type="ECO:0000250" key="1"/>
<evidence type="ECO:0000269" key="2">
    <source>
    </source>
</evidence>
<evidence type="ECO:0000305" key="3"/>
<protein>
    <recommendedName>
        <fullName>Tyrosine-protein kinase CpsD</fullName>
        <ecNumber>2.7.10.2</ecNumber>
    </recommendedName>
</protein>
<sequence length="232" mass="25402">MTRLEIVDSKLRQAKKTEEYFNAIRTNIQFSGKENKILAITSVREGEGKSTTSTSLALSLAQAGFKTLLIDADTRNSVMSGTFKATGTIKGLTNYLSGNADLGDIICETNVPRLMVVPSGKVPPNPTALLQNAYFNKMIEAIKNIFDYIIIDTPPIGLVVDAAIIANACDGFILVTQAGRIKRNYVEKAKEQMEQSGSKFLGIILNKVSESVATYGDYGDYGNYGKRDRKRK</sequence>
<accession>Q3K0T0</accession>
<accession>Q93TJ2</accession>
<accession>Q9ALX5</accession>
<accession>Q9S0S7</accession>
<dbReference type="EC" id="2.7.10.2"/>
<dbReference type="EMBL" id="AB028896">
    <property type="protein sequence ID" value="BAA82278.1"/>
    <property type="molecule type" value="Genomic_DNA"/>
</dbReference>
<dbReference type="EMBL" id="CP000114">
    <property type="protein sequence ID" value="ABA45962.1"/>
    <property type="molecule type" value="Genomic_DNA"/>
</dbReference>
<dbReference type="RefSeq" id="WP_000197416.1">
    <property type="nucleotide sequence ID" value="NC_007432.1"/>
</dbReference>
<dbReference type="SMR" id="Q3K0T0"/>
<dbReference type="KEGG" id="sak:SAK_1259"/>
<dbReference type="HOGENOM" id="CLU_052027_2_0_9"/>
<dbReference type="UniPathway" id="UPA00934"/>
<dbReference type="GO" id="GO:0005886">
    <property type="term" value="C:plasma membrane"/>
    <property type="evidence" value="ECO:0007669"/>
    <property type="project" value="TreeGrafter"/>
</dbReference>
<dbReference type="GO" id="GO:0005524">
    <property type="term" value="F:ATP binding"/>
    <property type="evidence" value="ECO:0007669"/>
    <property type="project" value="UniProtKB-KW"/>
</dbReference>
<dbReference type="GO" id="GO:0004715">
    <property type="term" value="F:non-membrane spanning protein tyrosine kinase activity"/>
    <property type="evidence" value="ECO:0007669"/>
    <property type="project" value="UniProtKB-EC"/>
</dbReference>
<dbReference type="GO" id="GO:0045227">
    <property type="term" value="P:capsule polysaccharide biosynthetic process"/>
    <property type="evidence" value="ECO:0007669"/>
    <property type="project" value="UniProtKB-UniPathway"/>
</dbReference>
<dbReference type="CDD" id="cd05387">
    <property type="entry name" value="BY-kinase"/>
    <property type="match status" value="1"/>
</dbReference>
<dbReference type="Gene3D" id="3.40.50.300">
    <property type="entry name" value="P-loop containing nucleotide triphosphate hydrolases"/>
    <property type="match status" value="1"/>
</dbReference>
<dbReference type="InterPro" id="IPR025669">
    <property type="entry name" value="AAA_dom"/>
</dbReference>
<dbReference type="InterPro" id="IPR050445">
    <property type="entry name" value="Bact_polysacc_biosynth/exp"/>
</dbReference>
<dbReference type="InterPro" id="IPR027417">
    <property type="entry name" value="P-loop_NTPase"/>
</dbReference>
<dbReference type="InterPro" id="IPR005702">
    <property type="entry name" value="Wzc-like_C"/>
</dbReference>
<dbReference type="NCBIfam" id="TIGR01007">
    <property type="entry name" value="eps_fam"/>
    <property type="match status" value="1"/>
</dbReference>
<dbReference type="PANTHER" id="PTHR32309:SF13">
    <property type="entry name" value="FERRIC ENTEROBACTIN TRANSPORT PROTEIN FEPE"/>
    <property type="match status" value="1"/>
</dbReference>
<dbReference type="PANTHER" id="PTHR32309">
    <property type="entry name" value="TYROSINE-PROTEIN KINASE"/>
    <property type="match status" value="1"/>
</dbReference>
<dbReference type="Pfam" id="PF13614">
    <property type="entry name" value="AAA_31"/>
    <property type="match status" value="1"/>
</dbReference>
<dbReference type="SUPFAM" id="SSF52540">
    <property type="entry name" value="P-loop containing nucleoside triphosphate hydrolases"/>
    <property type="match status" value="1"/>
</dbReference>
<feature type="chain" id="PRO_0000217238" description="Tyrosine-protein kinase CpsD">
    <location>
        <begin position="1"/>
        <end position="232"/>
    </location>
</feature>
<feature type="sequence conflict" description="In Ref. 1; BAA82278." evidence="3" ref="1">
    <location>
        <begin position="218"/>
        <end position="220"/>
    </location>
</feature>
<organism>
    <name type="scientific">Streptococcus agalactiae serotype Ia (strain ATCC 27591 / A909 / CDC SS700)</name>
    <dbReference type="NCBI Taxonomy" id="205921"/>
    <lineage>
        <taxon>Bacteria</taxon>
        <taxon>Bacillati</taxon>
        <taxon>Bacillota</taxon>
        <taxon>Bacilli</taxon>
        <taxon>Lactobacillales</taxon>
        <taxon>Streptococcaceae</taxon>
        <taxon>Streptococcus</taxon>
    </lineage>
</organism>
<keyword id="KW-0067">ATP-binding</keyword>
<keyword id="KW-0972">Capsule biogenesis/degradation</keyword>
<keyword id="KW-0270">Exopolysaccharide synthesis</keyword>
<keyword id="KW-0418">Kinase</keyword>
<keyword id="KW-0547">Nucleotide-binding</keyword>
<keyword id="KW-0597">Phosphoprotein</keyword>
<keyword id="KW-0808">Transferase</keyword>
<keyword id="KW-0829">Tyrosine-protein kinase</keyword>
<reference key="1">
    <citation type="journal article" date="1999" name="J. Bacteriol.">
        <title>Molecular characterization of type-specific capsular polysaccharide biosynthesis genes of Streptococcus agalactiae type Ia.</title>
        <authorList>
            <person name="Yamamoto S."/>
            <person name="Miyake K."/>
            <person name="Koike Y."/>
            <person name="Watanabe M."/>
            <person name="Machida Y."/>
            <person name="Ohta M."/>
            <person name="Iijima S."/>
        </authorList>
    </citation>
    <scope>NUCLEOTIDE SEQUENCE [GENOMIC DNA]</scope>
    <source>
        <strain>OI1 / Serotype Ia</strain>
    </source>
</reference>
<reference key="2">
    <citation type="journal article" date="2005" name="Proc. Natl. Acad. Sci. U.S.A.">
        <title>Genome analysis of multiple pathogenic isolates of Streptococcus agalactiae: implications for the microbial 'pan-genome'.</title>
        <authorList>
            <person name="Tettelin H."/>
            <person name="Masignani V."/>
            <person name="Cieslewicz M.J."/>
            <person name="Donati C."/>
            <person name="Medini D."/>
            <person name="Ward N.L."/>
            <person name="Angiuoli S.V."/>
            <person name="Crabtree J."/>
            <person name="Jones A.L."/>
            <person name="Durkin A.S."/>
            <person name="DeBoy R.T."/>
            <person name="Davidsen T.M."/>
            <person name="Mora M."/>
            <person name="Scarselli M."/>
            <person name="Margarit y Ros I."/>
            <person name="Peterson J.D."/>
            <person name="Hauser C.R."/>
            <person name="Sundaram J.P."/>
            <person name="Nelson W.C."/>
            <person name="Madupu R."/>
            <person name="Brinkac L.M."/>
            <person name="Dodson R.J."/>
            <person name="Rosovitz M.J."/>
            <person name="Sullivan S.A."/>
            <person name="Daugherty S.C."/>
            <person name="Haft D.H."/>
            <person name="Selengut J."/>
            <person name="Gwinn M.L."/>
            <person name="Zhou L."/>
            <person name="Zafar N."/>
            <person name="Khouri H."/>
            <person name="Radune D."/>
            <person name="Dimitrov G."/>
            <person name="Watkins K."/>
            <person name="O'Connor K.J."/>
            <person name="Smith S."/>
            <person name="Utterback T.R."/>
            <person name="White O."/>
            <person name="Rubens C.E."/>
            <person name="Grandi G."/>
            <person name="Madoff L.C."/>
            <person name="Kasper D.L."/>
            <person name="Telford J.L."/>
            <person name="Wessels M.R."/>
            <person name="Rappuoli R."/>
            <person name="Fraser C.M."/>
        </authorList>
    </citation>
    <scope>NUCLEOTIDE SEQUENCE [LARGE SCALE GENOMIC DNA]</scope>
    <source>
        <strain>ATCC 27591 / A909 / CDC SS700</strain>
    </source>
</reference>
<reference key="3">
    <citation type="journal article" date="2001" name="J. Biol. Chem.">
        <title>Functional analysis in type Ia group B Streptococcus of a cluster of genes involved in extracellular polysaccharide production by diverse species of Streptococci.</title>
        <authorList>
            <person name="Cieslewicz M.J."/>
            <person name="Kasper D.L."/>
            <person name="Wang Y."/>
            <person name="Wessels M.R."/>
        </authorList>
    </citation>
    <scope>FUNCTION</scope>
    <source>
        <strain>515 / Serotype Ia</strain>
    </source>
</reference>
<gene>
    <name type="primary">cpsD</name>
    <name type="synonym">cpsIaD</name>
    <name type="ordered locus">SAK_1259</name>
</gene>
<comment type="function">
    <text evidence="2">Involved in the regulation of capsular polysaccharide biosynthesis. Autophosphorylation of CpsD attenuates its activity and reduces the level of encapsulation. May be part of a complex that directs the coordinated polymerization and export to the cell surface of the capsular polysaccharide.</text>
</comment>
<comment type="catalytic activity">
    <reaction>
        <text>L-tyrosyl-[protein] + ATP = O-phospho-L-tyrosyl-[protein] + ADP + H(+)</text>
        <dbReference type="Rhea" id="RHEA:10596"/>
        <dbReference type="Rhea" id="RHEA-COMP:10136"/>
        <dbReference type="Rhea" id="RHEA-COMP:20101"/>
        <dbReference type="ChEBI" id="CHEBI:15378"/>
        <dbReference type="ChEBI" id="CHEBI:30616"/>
        <dbReference type="ChEBI" id="CHEBI:46858"/>
        <dbReference type="ChEBI" id="CHEBI:61978"/>
        <dbReference type="ChEBI" id="CHEBI:456216"/>
        <dbReference type="EC" id="2.7.10.2"/>
    </reaction>
</comment>
<comment type="activity regulation">
    <text evidence="1">Dephosphorylated and activated by CpsB.</text>
</comment>
<comment type="pathway">
    <text>Capsule biogenesis; capsule polysaccharide biosynthesis.</text>
</comment>
<comment type="PTM">
    <text evidence="1">Autophosphorylated.</text>
</comment>
<comment type="similarity">
    <text evidence="3">Belongs to the CpsD/CapB family.</text>
</comment>
<proteinExistence type="inferred from homology"/>
<name>CPSD_STRA1</name>